<sequence length="550" mass="62040">MTNYIAALVDELYQLGVREAVISPGSRSTPLSVLFCEYGFQVYVGIDERSAGFFALGIAKEKERPVVLVCSSGSAVAHYFPAIVEAKHSHVPLIVLTADRPPELRQVGAPQTIDQIKFYHDYAKYFEELALPEEREGMYRYVRGVMRKAYVSSLDQGYGVAHINIPLREPLSPDLDGVDFTAGRLDYPFAWKTGEKGLTMDSSVFQDKKGIIICGGDPYADYHREVLELAERLKAPLLADPLANFRNDDHPLIMDCYDAFLKSDAVKVELKPEFIIHFGQTPVSKRLQNFTAMHQDVLYFQVNDYFQYRDPSLSISRYLVASPKAFARSVKVHNTDDGYSGRWQHYQARMRRRLNLAQDEEELFEGKLVQKLQDSLPEGSRLFVANSMAIRDVDYFLEARRQRIKVLGNRGANGIDGTVSTALGVATSGHPTVLLTGDLAFFHDLNGLLIGKNHGLNLIIVLLNNNGGAIFKYLPQSENKYFELLFMTPHGMDFSGLKTLYDLTYYEPVDYESFAQNFQEALTLSGVKVLNVKIDARLSKELHDRLTNLD</sequence>
<gene>
    <name evidence="1" type="primary">menD</name>
    <name type="ordered locus">Dhaf_0470</name>
</gene>
<name>MEND_DESHD</name>
<proteinExistence type="inferred from homology"/>
<evidence type="ECO:0000255" key="1">
    <source>
        <dbReference type="HAMAP-Rule" id="MF_01659"/>
    </source>
</evidence>
<accession>B8FTY8</accession>
<feature type="chain" id="PRO_1000187066" description="2-succinyl-5-enolpyruvyl-6-hydroxy-3-cyclohexene-1-carboxylate synthase">
    <location>
        <begin position="1"/>
        <end position="550"/>
    </location>
</feature>
<dbReference type="EC" id="2.2.1.9" evidence="1"/>
<dbReference type="EMBL" id="CP001336">
    <property type="protein sequence ID" value="ACL18537.1"/>
    <property type="molecule type" value="Genomic_DNA"/>
</dbReference>
<dbReference type="RefSeq" id="WP_011459122.1">
    <property type="nucleotide sequence ID" value="NC_011830.1"/>
</dbReference>
<dbReference type="SMR" id="B8FTY8"/>
<dbReference type="KEGG" id="dhd:Dhaf_0470"/>
<dbReference type="HOGENOM" id="CLU_006051_3_0_9"/>
<dbReference type="UniPathway" id="UPA00079"/>
<dbReference type="UniPathway" id="UPA01057">
    <property type="reaction ID" value="UER00164"/>
</dbReference>
<dbReference type="Proteomes" id="UP000007726">
    <property type="component" value="Chromosome"/>
</dbReference>
<dbReference type="GO" id="GO:0070204">
    <property type="term" value="F:2-succinyl-5-enolpyruvyl-6-hydroxy-3-cyclohexene-1-carboxylic-acid synthase activity"/>
    <property type="evidence" value="ECO:0007669"/>
    <property type="project" value="UniProtKB-UniRule"/>
</dbReference>
<dbReference type="GO" id="GO:0000287">
    <property type="term" value="F:magnesium ion binding"/>
    <property type="evidence" value="ECO:0007669"/>
    <property type="project" value="UniProtKB-UniRule"/>
</dbReference>
<dbReference type="GO" id="GO:0030145">
    <property type="term" value="F:manganese ion binding"/>
    <property type="evidence" value="ECO:0007669"/>
    <property type="project" value="UniProtKB-UniRule"/>
</dbReference>
<dbReference type="GO" id="GO:0030976">
    <property type="term" value="F:thiamine pyrophosphate binding"/>
    <property type="evidence" value="ECO:0007669"/>
    <property type="project" value="UniProtKB-UniRule"/>
</dbReference>
<dbReference type="GO" id="GO:0009234">
    <property type="term" value="P:menaquinone biosynthetic process"/>
    <property type="evidence" value="ECO:0007669"/>
    <property type="project" value="UniProtKB-UniRule"/>
</dbReference>
<dbReference type="CDD" id="cd07037">
    <property type="entry name" value="TPP_PYR_MenD"/>
    <property type="match status" value="1"/>
</dbReference>
<dbReference type="CDD" id="cd02009">
    <property type="entry name" value="TPP_SHCHC_synthase"/>
    <property type="match status" value="1"/>
</dbReference>
<dbReference type="Gene3D" id="3.40.50.970">
    <property type="match status" value="2"/>
</dbReference>
<dbReference type="Gene3D" id="3.40.50.1220">
    <property type="entry name" value="TPP-binding domain"/>
    <property type="match status" value="1"/>
</dbReference>
<dbReference type="HAMAP" id="MF_01659">
    <property type="entry name" value="MenD"/>
    <property type="match status" value="1"/>
</dbReference>
<dbReference type="InterPro" id="IPR029035">
    <property type="entry name" value="DHS-like_NAD/FAD-binding_dom"/>
</dbReference>
<dbReference type="InterPro" id="IPR004433">
    <property type="entry name" value="MenaQ_synth_MenD"/>
</dbReference>
<dbReference type="InterPro" id="IPR032264">
    <property type="entry name" value="MenD_middle"/>
</dbReference>
<dbReference type="InterPro" id="IPR029061">
    <property type="entry name" value="THDP-binding"/>
</dbReference>
<dbReference type="InterPro" id="IPR012001">
    <property type="entry name" value="Thiamin_PyroP_enz_TPP-bd_dom"/>
</dbReference>
<dbReference type="InterPro" id="IPR011766">
    <property type="entry name" value="TPP_enzyme_TPP-bd"/>
</dbReference>
<dbReference type="NCBIfam" id="TIGR00173">
    <property type="entry name" value="menD"/>
    <property type="match status" value="1"/>
</dbReference>
<dbReference type="PANTHER" id="PTHR42916">
    <property type="entry name" value="2-SUCCINYL-5-ENOLPYRUVYL-6-HYDROXY-3-CYCLOHEXENE-1-CARBOXYLATE SYNTHASE"/>
    <property type="match status" value="1"/>
</dbReference>
<dbReference type="PANTHER" id="PTHR42916:SF1">
    <property type="entry name" value="PROTEIN PHYLLO, CHLOROPLASTIC"/>
    <property type="match status" value="1"/>
</dbReference>
<dbReference type="Pfam" id="PF02775">
    <property type="entry name" value="TPP_enzyme_C"/>
    <property type="match status" value="1"/>
</dbReference>
<dbReference type="Pfam" id="PF16582">
    <property type="entry name" value="TPP_enzyme_M_2"/>
    <property type="match status" value="1"/>
</dbReference>
<dbReference type="Pfam" id="PF02776">
    <property type="entry name" value="TPP_enzyme_N"/>
    <property type="match status" value="1"/>
</dbReference>
<dbReference type="PIRSF" id="PIRSF004983">
    <property type="entry name" value="MenD"/>
    <property type="match status" value="1"/>
</dbReference>
<dbReference type="SUPFAM" id="SSF52467">
    <property type="entry name" value="DHS-like NAD/FAD-binding domain"/>
    <property type="match status" value="1"/>
</dbReference>
<dbReference type="SUPFAM" id="SSF52518">
    <property type="entry name" value="Thiamin diphosphate-binding fold (THDP-binding)"/>
    <property type="match status" value="2"/>
</dbReference>
<comment type="function">
    <text evidence="1">Catalyzes the thiamine diphosphate-dependent decarboxylation of 2-oxoglutarate and the subsequent addition of the resulting succinic semialdehyde-thiamine pyrophosphate anion to isochorismate to yield 2-succinyl-5-enolpyruvyl-6-hydroxy-3-cyclohexene-1-carboxylate (SEPHCHC).</text>
</comment>
<comment type="catalytic activity">
    <reaction evidence="1">
        <text>isochorismate + 2-oxoglutarate + H(+) = 5-enolpyruvoyl-6-hydroxy-2-succinyl-cyclohex-3-ene-1-carboxylate + CO2</text>
        <dbReference type="Rhea" id="RHEA:25593"/>
        <dbReference type="ChEBI" id="CHEBI:15378"/>
        <dbReference type="ChEBI" id="CHEBI:16526"/>
        <dbReference type="ChEBI" id="CHEBI:16810"/>
        <dbReference type="ChEBI" id="CHEBI:29780"/>
        <dbReference type="ChEBI" id="CHEBI:58818"/>
        <dbReference type="EC" id="2.2.1.9"/>
    </reaction>
</comment>
<comment type="cofactor">
    <cofactor evidence="1">
        <name>Mg(2+)</name>
        <dbReference type="ChEBI" id="CHEBI:18420"/>
    </cofactor>
    <cofactor evidence="1">
        <name>Mn(2+)</name>
        <dbReference type="ChEBI" id="CHEBI:29035"/>
    </cofactor>
</comment>
<comment type="cofactor">
    <cofactor evidence="1">
        <name>thiamine diphosphate</name>
        <dbReference type="ChEBI" id="CHEBI:58937"/>
    </cofactor>
    <text evidence="1">Binds 1 thiamine pyrophosphate per subunit.</text>
</comment>
<comment type="pathway">
    <text evidence="1">Quinol/quinone metabolism; 1,4-dihydroxy-2-naphthoate biosynthesis; 1,4-dihydroxy-2-naphthoate from chorismate: step 2/7.</text>
</comment>
<comment type="pathway">
    <text evidence="1">Quinol/quinone metabolism; menaquinone biosynthesis.</text>
</comment>
<comment type="subunit">
    <text evidence="1">Homodimer.</text>
</comment>
<comment type="similarity">
    <text evidence="1">Belongs to the TPP enzyme family. MenD subfamily.</text>
</comment>
<organism>
    <name type="scientific">Desulfitobacterium hafniense (strain DSM 10664 / DCB-2)</name>
    <dbReference type="NCBI Taxonomy" id="272564"/>
    <lineage>
        <taxon>Bacteria</taxon>
        <taxon>Bacillati</taxon>
        <taxon>Bacillota</taxon>
        <taxon>Clostridia</taxon>
        <taxon>Eubacteriales</taxon>
        <taxon>Desulfitobacteriaceae</taxon>
        <taxon>Desulfitobacterium</taxon>
    </lineage>
</organism>
<reference key="1">
    <citation type="journal article" date="2012" name="BMC Microbiol.">
        <title>Genome sequence of Desulfitobacterium hafniense DCB-2, a Gram-positive anaerobe capable of dehalogenation and metal reduction.</title>
        <authorList>
            <person name="Kim S.H."/>
            <person name="Harzman C."/>
            <person name="Davis J.K."/>
            <person name="Hutcheson R."/>
            <person name="Broderick J.B."/>
            <person name="Marsh T.L."/>
            <person name="Tiedje J.M."/>
        </authorList>
    </citation>
    <scope>NUCLEOTIDE SEQUENCE [LARGE SCALE GENOMIC DNA]</scope>
    <source>
        <strain>DSM 10664 / DCB-2</strain>
    </source>
</reference>
<keyword id="KW-0460">Magnesium</keyword>
<keyword id="KW-0464">Manganese</keyword>
<keyword id="KW-0474">Menaquinone biosynthesis</keyword>
<keyword id="KW-0479">Metal-binding</keyword>
<keyword id="KW-0786">Thiamine pyrophosphate</keyword>
<keyword id="KW-0808">Transferase</keyword>
<protein>
    <recommendedName>
        <fullName evidence="1">2-succinyl-5-enolpyruvyl-6-hydroxy-3-cyclohexene-1-carboxylate synthase</fullName>
        <shortName evidence="1">SEPHCHC synthase</shortName>
        <ecNumber evidence="1">2.2.1.9</ecNumber>
    </recommendedName>
    <alternativeName>
        <fullName evidence="1">Menaquinone biosynthesis protein MenD</fullName>
    </alternativeName>
</protein>